<accession>B4T0I0</accession>
<protein>
    <recommendedName>
        <fullName evidence="1">Oxygen-dependent coproporphyrinogen-III oxidase</fullName>
        <shortName evidence="1">CPO</shortName>
        <shortName evidence="1">Coprogen oxidase</shortName>
        <shortName evidence="1">Coproporphyrinogenase</shortName>
        <ecNumber evidence="1">1.3.3.3</ecNumber>
    </recommendedName>
</protein>
<proteinExistence type="inferred from homology"/>
<sequence>MKPDAHHVKQFLLRLQDDICQTLSAVDGANFVEDSWRREAGGGGRSRVLRNGGIFEQAGVNFSHVHGDAMPASATAHRPELAGRSFEAMGVSLVVHPHNPYIPTSHANVRFFIAEKPGADPVWWFGGGFDLTPYYGFEEDAVHWHRTARDLCQPFGDDVYPRYKKWCDDYFFLKHRNEQRGIGGLFFDDLNTPDFDHCFAFMQAVGNGYTEAYLPIVERRKAMVWGERERNFQLYRRGRYVEFNLVWDRGTLFGLQTGGRTESILMSMPPLVRWEYDWQPEAGSPEAALSEFIQVRDWI</sequence>
<dbReference type="EC" id="1.3.3.3" evidence="1"/>
<dbReference type="EMBL" id="CP001113">
    <property type="protein sequence ID" value="ACF61860.1"/>
    <property type="molecule type" value="Genomic_DNA"/>
</dbReference>
<dbReference type="RefSeq" id="WP_000801339.1">
    <property type="nucleotide sequence ID" value="NZ_CCMR01000001.1"/>
</dbReference>
<dbReference type="SMR" id="B4T0I0"/>
<dbReference type="KEGG" id="see:SNSL254_A2645"/>
<dbReference type="HOGENOM" id="CLU_026169_0_1_6"/>
<dbReference type="UniPathway" id="UPA00251">
    <property type="reaction ID" value="UER00322"/>
</dbReference>
<dbReference type="Proteomes" id="UP000008824">
    <property type="component" value="Chromosome"/>
</dbReference>
<dbReference type="GO" id="GO:0005737">
    <property type="term" value="C:cytoplasm"/>
    <property type="evidence" value="ECO:0007669"/>
    <property type="project" value="UniProtKB-SubCell"/>
</dbReference>
<dbReference type="GO" id="GO:0004109">
    <property type="term" value="F:coproporphyrinogen oxidase activity"/>
    <property type="evidence" value="ECO:0007669"/>
    <property type="project" value="UniProtKB-UniRule"/>
</dbReference>
<dbReference type="GO" id="GO:0046872">
    <property type="term" value="F:metal ion binding"/>
    <property type="evidence" value="ECO:0007669"/>
    <property type="project" value="UniProtKB-KW"/>
</dbReference>
<dbReference type="GO" id="GO:0042803">
    <property type="term" value="F:protein homodimerization activity"/>
    <property type="evidence" value="ECO:0000250"/>
    <property type="project" value="UniProtKB"/>
</dbReference>
<dbReference type="GO" id="GO:0006782">
    <property type="term" value="P:protoporphyrinogen IX biosynthetic process"/>
    <property type="evidence" value="ECO:0007669"/>
    <property type="project" value="UniProtKB-UniRule"/>
</dbReference>
<dbReference type="FunFam" id="3.40.1500.10:FF:000001">
    <property type="entry name" value="Oxygen-dependent coproporphyrinogen-III oxidase"/>
    <property type="match status" value="1"/>
</dbReference>
<dbReference type="Gene3D" id="3.40.1500.10">
    <property type="entry name" value="Coproporphyrinogen III oxidase, aerobic"/>
    <property type="match status" value="1"/>
</dbReference>
<dbReference type="HAMAP" id="MF_00333">
    <property type="entry name" value="Coprogen_oxidas"/>
    <property type="match status" value="1"/>
</dbReference>
<dbReference type="InterPro" id="IPR001260">
    <property type="entry name" value="Coprogen_oxidase_aer"/>
</dbReference>
<dbReference type="InterPro" id="IPR036406">
    <property type="entry name" value="Coprogen_oxidase_aer_sf"/>
</dbReference>
<dbReference type="InterPro" id="IPR018375">
    <property type="entry name" value="Coprogen_oxidase_CS"/>
</dbReference>
<dbReference type="NCBIfam" id="NF003727">
    <property type="entry name" value="PRK05330.1"/>
    <property type="match status" value="1"/>
</dbReference>
<dbReference type="PANTHER" id="PTHR10755">
    <property type="entry name" value="COPROPORPHYRINOGEN III OXIDASE, MITOCHONDRIAL"/>
    <property type="match status" value="1"/>
</dbReference>
<dbReference type="PANTHER" id="PTHR10755:SF0">
    <property type="entry name" value="OXYGEN-DEPENDENT COPROPORPHYRINOGEN-III OXIDASE, MITOCHONDRIAL"/>
    <property type="match status" value="1"/>
</dbReference>
<dbReference type="Pfam" id="PF01218">
    <property type="entry name" value="Coprogen_oxidas"/>
    <property type="match status" value="1"/>
</dbReference>
<dbReference type="PIRSF" id="PIRSF000166">
    <property type="entry name" value="Coproporphyri_ox"/>
    <property type="match status" value="1"/>
</dbReference>
<dbReference type="PRINTS" id="PR00073">
    <property type="entry name" value="COPRGNOXDASE"/>
</dbReference>
<dbReference type="SUPFAM" id="SSF102886">
    <property type="entry name" value="Coproporphyrinogen III oxidase"/>
    <property type="match status" value="1"/>
</dbReference>
<dbReference type="PROSITE" id="PS01021">
    <property type="entry name" value="COPROGEN_OXIDASE"/>
    <property type="match status" value="1"/>
</dbReference>
<reference key="1">
    <citation type="journal article" date="2011" name="J. Bacteriol.">
        <title>Comparative genomics of 28 Salmonella enterica isolates: evidence for CRISPR-mediated adaptive sublineage evolution.</title>
        <authorList>
            <person name="Fricke W.F."/>
            <person name="Mammel M.K."/>
            <person name="McDermott P.F."/>
            <person name="Tartera C."/>
            <person name="White D.G."/>
            <person name="Leclerc J.E."/>
            <person name="Ravel J."/>
            <person name="Cebula T.A."/>
        </authorList>
    </citation>
    <scope>NUCLEOTIDE SEQUENCE [LARGE SCALE GENOMIC DNA]</scope>
    <source>
        <strain>SL254</strain>
    </source>
</reference>
<comment type="function">
    <text evidence="1">Involved in the heme biosynthesis. Catalyzes the aerobic oxidative decarboxylation of propionate groups of rings A and B of coproporphyrinogen-III to yield the vinyl groups in protoporphyrinogen-IX.</text>
</comment>
<comment type="catalytic activity">
    <reaction evidence="1">
        <text>coproporphyrinogen III + O2 + 2 H(+) = protoporphyrinogen IX + 2 CO2 + 2 H2O</text>
        <dbReference type="Rhea" id="RHEA:18257"/>
        <dbReference type="ChEBI" id="CHEBI:15377"/>
        <dbReference type="ChEBI" id="CHEBI:15378"/>
        <dbReference type="ChEBI" id="CHEBI:15379"/>
        <dbReference type="ChEBI" id="CHEBI:16526"/>
        <dbReference type="ChEBI" id="CHEBI:57307"/>
        <dbReference type="ChEBI" id="CHEBI:57309"/>
        <dbReference type="EC" id="1.3.3.3"/>
    </reaction>
</comment>
<comment type="cofactor">
    <cofactor evidence="1">
        <name>a divalent metal cation</name>
        <dbReference type="ChEBI" id="CHEBI:60240"/>
    </cofactor>
</comment>
<comment type="pathway">
    <text evidence="1">Porphyrin-containing compound metabolism; protoporphyrin-IX biosynthesis; protoporphyrinogen-IX from coproporphyrinogen-III (O2 route): step 1/1.</text>
</comment>
<comment type="subunit">
    <text evidence="1">Homodimer.</text>
</comment>
<comment type="subcellular location">
    <subcellularLocation>
        <location evidence="1">Cytoplasm</location>
    </subcellularLocation>
</comment>
<comment type="similarity">
    <text evidence="1">Belongs to the aerobic coproporphyrinogen-III oxidase family.</text>
</comment>
<name>HEM6_SALNS</name>
<organism>
    <name type="scientific">Salmonella newport (strain SL254)</name>
    <dbReference type="NCBI Taxonomy" id="423368"/>
    <lineage>
        <taxon>Bacteria</taxon>
        <taxon>Pseudomonadati</taxon>
        <taxon>Pseudomonadota</taxon>
        <taxon>Gammaproteobacteria</taxon>
        <taxon>Enterobacterales</taxon>
        <taxon>Enterobacteriaceae</taxon>
        <taxon>Salmonella</taxon>
    </lineage>
</organism>
<evidence type="ECO:0000255" key="1">
    <source>
        <dbReference type="HAMAP-Rule" id="MF_00333"/>
    </source>
</evidence>
<feature type="chain" id="PRO_1000119823" description="Oxygen-dependent coproporphyrinogen-III oxidase">
    <location>
        <begin position="1"/>
        <end position="299"/>
    </location>
</feature>
<feature type="region of interest" description="Important for dimerization" evidence="1">
    <location>
        <begin position="240"/>
        <end position="275"/>
    </location>
</feature>
<feature type="active site" description="Proton donor" evidence="1">
    <location>
        <position position="106"/>
    </location>
</feature>
<feature type="binding site" evidence="1">
    <location>
        <position position="92"/>
    </location>
    <ligand>
        <name>substrate</name>
    </ligand>
</feature>
<feature type="binding site" evidence="1">
    <location>
        <position position="96"/>
    </location>
    <ligand>
        <name>a divalent metal cation</name>
        <dbReference type="ChEBI" id="CHEBI:60240"/>
    </ligand>
</feature>
<feature type="binding site" evidence="1">
    <location>
        <position position="106"/>
    </location>
    <ligand>
        <name>a divalent metal cation</name>
        <dbReference type="ChEBI" id="CHEBI:60240"/>
    </ligand>
</feature>
<feature type="binding site" evidence="1">
    <location>
        <begin position="108"/>
        <end position="110"/>
    </location>
    <ligand>
        <name>substrate</name>
    </ligand>
</feature>
<feature type="binding site" evidence="1">
    <location>
        <position position="145"/>
    </location>
    <ligand>
        <name>a divalent metal cation</name>
        <dbReference type="ChEBI" id="CHEBI:60240"/>
    </ligand>
</feature>
<feature type="binding site" evidence="1">
    <location>
        <position position="175"/>
    </location>
    <ligand>
        <name>a divalent metal cation</name>
        <dbReference type="ChEBI" id="CHEBI:60240"/>
    </ligand>
</feature>
<feature type="binding site" evidence="1">
    <location>
        <begin position="258"/>
        <end position="260"/>
    </location>
    <ligand>
        <name>substrate</name>
    </ligand>
</feature>
<feature type="site" description="Important for dimerization" evidence="1">
    <location>
        <position position="175"/>
    </location>
</feature>
<keyword id="KW-0963">Cytoplasm</keyword>
<keyword id="KW-0350">Heme biosynthesis</keyword>
<keyword id="KW-0479">Metal-binding</keyword>
<keyword id="KW-0560">Oxidoreductase</keyword>
<keyword id="KW-0627">Porphyrin biosynthesis</keyword>
<gene>
    <name evidence="1" type="primary">hemF</name>
    <name type="ordered locus">SNSL254_A2645</name>
</gene>